<comment type="function">
    <text evidence="1 2 3">Modulates the competence to flowering of apical meristems. Involved in a GA-dependent response in apical meristems during the transition to flowering.</text>
</comment>
<comment type="interaction">
    <interactant intactId="EBI-4476833">
        <id>O23624</id>
    </interactant>
    <interactant intactId="EBI-15193683">
        <id>Q5CCK4</id>
        <label>VAL2</label>
    </interactant>
    <organismsDiffer>false</organismsDiffer>
    <experiments>3</experiments>
</comment>
<comment type="developmental stage">
    <text evidence="2">After the photoperiodic induction of flowering and in early transition stages, expression is only detectable in the peripheral zone of apical meristems. Later on, it can also be found in floral meristems and in axillary meristems that form secondary inflorescences.</text>
</comment>
<comment type="miscellaneous">
    <text>Overexpression of FPF1 results in shortening of the time to flowering.</text>
</comment>
<comment type="similarity">
    <text evidence="4">Belongs to the FPF1 family.</text>
</comment>
<keyword id="KW-1185">Reference proteome</keyword>
<gene>
    <name type="primary">FPF1</name>
    <name type="ordered locus">At5g24860</name>
    <name type="ORF">F6A4</name>
    <name type="ORF">T4C12</name>
</gene>
<dbReference type="EMBL" id="AF069716">
    <property type="status" value="NOT_ANNOTATED_CDS"/>
    <property type="molecule type" value="Genomic_DNA"/>
</dbReference>
<dbReference type="EMBL" id="AL392145">
    <property type="status" value="NOT_ANNOTATED_CDS"/>
    <property type="molecule type" value="Genomic_DNA"/>
</dbReference>
<dbReference type="EMBL" id="CP002688">
    <property type="protein sequence ID" value="AED93370.1"/>
    <property type="molecule type" value="Genomic_DNA"/>
</dbReference>
<dbReference type="EMBL" id="BT025027">
    <property type="protein sequence ID" value="ABE02402.1"/>
    <property type="molecule type" value="mRNA"/>
</dbReference>
<dbReference type="EMBL" id="Y11988">
    <property type="protein sequence ID" value="CAA72717.1"/>
    <property type="molecule type" value="mRNA"/>
</dbReference>
<dbReference type="RefSeq" id="NP_197868.1">
    <property type="nucleotide sequence ID" value="NM_122395.5"/>
</dbReference>
<dbReference type="BioGRID" id="17830">
    <property type="interactions" value="2"/>
</dbReference>
<dbReference type="IntAct" id="O23624">
    <property type="interactions" value="2"/>
</dbReference>
<dbReference type="STRING" id="3702.O23624"/>
<dbReference type="PaxDb" id="3702-AT5G24860.1"/>
<dbReference type="ProteomicsDB" id="248551"/>
<dbReference type="EnsemblPlants" id="AT5G24860.1">
    <property type="protein sequence ID" value="AT5G24860.1"/>
    <property type="gene ID" value="AT5G24860"/>
</dbReference>
<dbReference type="GeneID" id="832555"/>
<dbReference type="Gramene" id="AT5G24860.1">
    <property type="protein sequence ID" value="AT5G24860.1"/>
    <property type="gene ID" value="AT5G24860"/>
</dbReference>
<dbReference type="KEGG" id="ath:AT5G24860"/>
<dbReference type="Araport" id="AT5G24860"/>
<dbReference type="TAIR" id="AT5G24860">
    <property type="gene designation" value="FPF1"/>
</dbReference>
<dbReference type="eggNOG" id="ENOG502S12G">
    <property type="taxonomic scope" value="Eukaryota"/>
</dbReference>
<dbReference type="HOGENOM" id="CLU_121629_0_1_1"/>
<dbReference type="InParanoid" id="O23624"/>
<dbReference type="OMA" id="HSRRKVM"/>
<dbReference type="OrthoDB" id="612242at2759"/>
<dbReference type="PhylomeDB" id="O23624"/>
<dbReference type="PRO" id="PR:O23624"/>
<dbReference type="Proteomes" id="UP000006548">
    <property type="component" value="Chromosome 5"/>
</dbReference>
<dbReference type="ExpressionAtlas" id="O23624">
    <property type="expression patterns" value="baseline and differential"/>
</dbReference>
<dbReference type="GO" id="GO:0009911">
    <property type="term" value="P:positive regulation of flower development"/>
    <property type="evidence" value="ECO:0000315"/>
    <property type="project" value="TAIR"/>
</dbReference>
<dbReference type="GO" id="GO:0010228">
    <property type="term" value="P:vegetative to reproductive phase transition of meristem"/>
    <property type="evidence" value="ECO:0000315"/>
    <property type="project" value="UniProtKB"/>
</dbReference>
<dbReference type="InterPro" id="IPR039274">
    <property type="entry name" value="FPF1"/>
</dbReference>
<dbReference type="PANTHER" id="PTHR33433">
    <property type="entry name" value="FLOWERING-PROMOTING FACTOR 1-LIKE PROTEIN 1"/>
    <property type="match status" value="1"/>
</dbReference>
<evidence type="ECO:0000269" key="1">
    <source>
    </source>
</evidence>
<evidence type="ECO:0000269" key="2">
    <source>
    </source>
</evidence>
<evidence type="ECO:0000269" key="3">
    <source ref="6"/>
</evidence>
<evidence type="ECO:0000305" key="4"/>
<organism>
    <name type="scientific">Arabidopsis thaliana</name>
    <name type="common">Mouse-ear cress</name>
    <dbReference type="NCBI Taxonomy" id="3702"/>
    <lineage>
        <taxon>Eukaryota</taxon>
        <taxon>Viridiplantae</taxon>
        <taxon>Streptophyta</taxon>
        <taxon>Embryophyta</taxon>
        <taxon>Tracheophyta</taxon>
        <taxon>Spermatophyta</taxon>
        <taxon>Magnoliopsida</taxon>
        <taxon>eudicotyledons</taxon>
        <taxon>Gunneridae</taxon>
        <taxon>Pentapetalae</taxon>
        <taxon>rosids</taxon>
        <taxon>malvids</taxon>
        <taxon>Brassicales</taxon>
        <taxon>Brassicaceae</taxon>
        <taxon>Camelineae</taxon>
        <taxon>Arabidopsis</taxon>
    </lineage>
</organism>
<proteinExistence type="evidence at protein level"/>
<feature type="chain" id="PRO_0000417312" description="Flowering-promoting factor 1">
    <location>
        <begin position="1"/>
        <end position="110"/>
    </location>
</feature>
<reference key="1">
    <citation type="journal article" date="1997" name="Plant Cell">
        <title>FPF1 promotes flowering in Arabidopsis.</title>
        <authorList>
            <person name="Kania T."/>
            <person name="Russenberger D."/>
            <person name="Peng S."/>
            <person name="Apel K."/>
            <person name="Melzer S."/>
        </authorList>
    </citation>
    <scope>NUCLEOTIDE SEQUENCE [MRNA]</scope>
    <scope>DEVELOPMENTAL STAGE</scope>
    <scope>FUNCTION</scope>
</reference>
<reference key="2">
    <citation type="journal article" date="2000" name="Nature">
        <title>Sequence and analysis of chromosome 5 of the plant Arabidopsis thaliana.</title>
        <authorList>
            <person name="Tabata S."/>
            <person name="Kaneko T."/>
            <person name="Nakamura Y."/>
            <person name="Kotani H."/>
            <person name="Kato T."/>
            <person name="Asamizu E."/>
            <person name="Miyajima N."/>
            <person name="Sasamoto S."/>
            <person name="Kimura T."/>
            <person name="Hosouchi T."/>
            <person name="Kawashima K."/>
            <person name="Kohara M."/>
            <person name="Matsumoto M."/>
            <person name="Matsuno A."/>
            <person name="Muraki A."/>
            <person name="Nakayama S."/>
            <person name="Nakazaki N."/>
            <person name="Naruo K."/>
            <person name="Okumura S."/>
            <person name="Shinpo S."/>
            <person name="Takeuchi C."/>
            <person name="Wada T."/>
            <person name="Watanabe A."/>
            <person name="Yamada M."/>
            <person name="Yasuda M."/>
            <person name="Sato S."/>
            <person name="de la Bastide M."/>
            <person name="Huang E."/>
            <person name="Spiegel L."/>
            <person name="Gnoj L."/>
            <person name="O'Shaughnessy A."/>
            <person name="Preston R."/>
            <person name="Habermann K."/>
            <person name="Murray J."/>
            <person name="Johnson D."/>
            <person name="Rohlfing T."/>
            <person name="Nelson J."/>
            <person name="Stoneking T."/>
            <person name="Pepin K."/>
            <person name="Spieth J."/>
            <person name="Sekhon M."/>
            <person name="Armstrong J."/>
            <person name="Becker M."/>
            <person name="Belter E."/>
            <person name="Cordum H."/>
            <person name="Cordes M."/>
            <person name="Courtney L."/>
            <person name="Courtney W."/>
            <person name="Dante M."/>
            <person name="Du H."/>
            <person name="Edwards J."/>
            <person name="Fryman J."/>
            <person name="Haakensen B."/>
            <person name="Lamar E."/>
            <person name="Latreille P."/>
            <person name="Leonard S."/>
            <person name="Meyer R."/>
            <person name="Mulvaney E."/>
            <person name="Ozersky P."/>
            <person name="Riley A."/>
            <person name="Strowmatt C."/>
            <person name="Wagner-McPherson C."/>
            <person name="Wollam A."/>
            <person name="Yoakum M."/>
            <person name="Bell M."/>
            <person name="Dedhia N."/>
            <person name="Parnell L."/>
            <person name="Shah R."/>
            <person name="Rodriguez M."/>
            <person name="Hoon See L."/>
            <person name="Vil D."/>
            <person name="Baker J."/>
            <person name="Kirchoff K."/>
            <person name="Toth K."/>
            <person name="King L."/>
            <person name="Bahret A."/>
            <person name="Miller B."/>
            <person name="Marra M.A."/>
            <person name="Martienssen R."/>
            <person name="McCombie W.R."/>
            <person name="Wilson R.K."/>
            <person name="Murphy G."/>
            <person name="Bancroft I."/>
            <person name="Volckaert G."/>
            <person name="Wambutt R."/>
            <person name="Duesterhoeft A."/>
            <person name="Stiekema W."/>
            <person name="Pohl T."/>
            <person name="Entian K.-D."/>
            <person name="Terryn N."/>
            <person name="Hartley N."/>
            <person name="Bent E."/>
            <person name="Johnson S."/>
            <person name="Langham S.-A."/>
            <person name="McCullagh B."/>
            <person name="Robben J."/>
            <person name="Grymonprez B."/>
            <person name="Zimmermann W."/>
            <person name="Ramsperger U."/>
            <person name="Wedler H."/>
            <person name="Balke K."/>
            <person name="Wedler E."/>
            <person name="Peters S."/>
            <person name="van Staveren M."/>
            <person name="Dirkse W."/>
            <person name="Mooijman P."/>
            <person name="Klein Lankhorst R."/>
            <person name="Weitzenegger T."/>
            <person name="Bothe G."/>
            <person name="Rose M."/>
            <person name="Hauf J."/>
            <person name="Berneiser S."/>
            <person name="Hempel S."/>
            <person name="Feldpausch M."/>
            <person name="Lamberth S."/>
            <person name="Villarroel R."/>
            <person name="Gielen J."/>
            <person name="Ardiles W."/>
            <person name="Bents O."/>
            <person name="Lemcke K."/>
            <person name="Kolesov G."/>
            <person name="Mayer K.F.X."/>
            <person name="Rudd S."/>
            <person name="Schoof H."/>
            <person name="Schueller C."/>
            <person name="Zaccaria P."/>
            <person name="Mewes H.-W."/>
            <person name="Bevan M."/>
            <person name="Fransz P.F."/>
        </authorList>
    </citation>
    <scope>NUCLEOTIDE SEQUENCE [LARGE SCALE GENOMIC DNA]</scope>
    <source>
        <strain>cv. Columbia</strain>
    </source>
</reference>
<reference key="3">
    <citation type="journal article" date="2017" name="Plant J.">
        <title>Araport11: a complete reannotation of the Arabidopsis thaliana reference genome.</title>
        <authorList>
            <person name="Cheng C.Y."/>
            <person name="Krishnakumar V."/>
            <person name="Chan A.P."/>
            <person name="Thibaud-Nissen F."/>
            <person name="Schobel S."/>
            <person name="Town C.D."/>
        </authorList>
    </citation>
    <scope>GENOME REANNOTATION</scope>
    <source>
        <strain>cv. Columbia</strain>
    </source>
</reference>
<reference key="4">
    <citation type="submission" date="2006-04" db="EMBL/GenBank/DDBJ databases">
        <title>Arabidopsis ORF clones.</title>
        <authorList>
            <person name="Shinn P."/>
            <person name="Chen H."/>
            <person name="Kim C.J."/>
            <person name="Ecker J.R."/>
        </authorList>
    </citation>
    <scope>NUCLEOTIDE SEQUENCE [LARGE SCALE MRNA]</scope>
    <source>
        <strain>cv. Columbia</strain>
    </source>
</reference>
<reference key="5">
    <citation type="journal article" date="1999" name="Plant J.">
        <title>FPF1 modulates the competence to flowering in Arabidopsis.</title>
        <authorList>
            <person name="Melzer S."/>
            <person name="Kampmann G."/>
            <person name="Chandler J."/>
            <person name="Apel K."/>
        </authorList>
    </citation>
    <scope>FUNCTION</scope>
</reference>
<reference key="6">
    <citation type="book" date="2000" name="Proceedings of the 11th international conference on Arabidopsis research">
        <title>The FPF gene family and flowering time control in Arabidopsis.</title>
        <authorList>
            <person name="Borner R."/>
            <person name="Kampmann G."/>
            <person name="Apel K."/>
            <person name="Melzer S."/>
        </authorList>
    </citation>
    <scope>GENE FAMILY</scope>
    <scope>FUNCTION</scope>
    <scope>TISSUE SPECIFICITY</scope>
</reference>
<accession>O23624</accession>
<protein>
    <recommendedName>
        <fullName>Flowering-promoting factor 1</fullName>
        <shortName>AtFPF1</shortName>
    </recommendedName>
</protein>
<name>FPF1_ARATH</name>
<sequence length="110" mass="12722">MSGVWVFKNGVIRLVENPNQSGSDTQNRRKVMVYLPTGEVVSSYSTLEQILQSLGWERYFGGGDTDLLQFHKRSSIDLISLPRDFTKFNSVYMYDIVVKNPNYFHVRDSH</sequence>